<comment type="function">
    <text evidence="1">Involved in protein export. Acts as a chaperone by maintaining the newly synthesized protein in an open conformation. Functions as a peptidyl-prolyl cis-trans isomerase.</text>
</comment>
<comment type="catalytic activity">
    <reaction evidence="1">
        <text>[protein]-peptidylproline (omega=180) = [protein]-peptidylproline (omega=0)</text>
        <dbReference type="Rhea" id="RHEA:16237"/>
        <dbReference type="Rhea" id="RHEA-COMP:10747"/>
        <dbReference type="Rhea" id="RHEA-COMP:10748"/>
        <dbReference type="ChEBI" id="CHEBI:83833"/>
        <dbReference type="ChEBI" id="CHEBI:83834"/>
        <dbReference type="EC" id="5.2.1.8"/>
    </reaction>
</comment>
<comment type="subcellular location">
    <subcellularLocation>
        <location>Cytoplasm</location>
    </subcellularLocation>
    <text evidence="1">About half TF is bound to the ribosome near the polypeptide exit tunnel while the other half is free in the cytoplasm.</text>
</comment>
<comment type="domain">
    <text evidence="1">Consists of 3 domains; the N-terminus binds the ribosome, the middle domain has PPIase activity, while the C-terminus has intrinsic chaperone activity on its own.</text>
</comment>
<comment type="similarity">
    <text evidence="1">Belongs to the FKBP-type PPIase family. Tig subfamily.</text>
</comment>
<sequence>MKLLNKIKNENAIEFQVLIEKSEWEKKHNEAFEKVAKKTASKLKIPGFRPGNVPVEEAKKHVNEIEVFETTTNDLVPQALTFLEQDESFTSDNSETVDTPSIDILDFKDGELTLKIAYDLYPVATIDSYNDLVLTPIVNEAFDHEVNAEIEHALSSKSQRRVKDENELIEKGDEVRFDFKGMIDNVPFQGGSAKDHLLTIGSNQFIPGFEDQMIGLKVGEQKNLEVKFPDDYHATDLAGRSAVFEVLIKEITSVKPQELNDEFAKSFNLPNVNTVQELKDYIHNQIVLAKQERNSERAWLEIAQQLLAKAKVTPIPQSLIDREVSTLKQQVISQLSQYKIDLKQYLEFSKKSESQFQEDLVKQAKETIALALLVDDIAENQKIVVSDDEVKERIAEMAKLYQGEEEAIIERLSQNPDAVKEFLLHKKVVNYLIDLNKNNQPKDTASTLSKQEDKPKVAKAKTSNTKKVASKK</sequence>
<gene>
    <name evidence="1" type="primary">tig</name>
    <name type="ordered locus">UUR10_0354</name>
</gene>
<name>TIG_UREU1</name>
<dbReference type="EC" id="5.2.1.8" evidence="1"/>
<dbReference type="EMBL" id="CP001184">
    <property type="protein sequence ID" value="ACI59819.1"/>
    <property type="molecule type" value="Genomic_DNA"/>
</dbReference>
<dbReference type="RefSeq" id="WP_012560204.1">
    <property type="nucleotide sequence ID" value="NC_011374.1"/>
</dbReference>
<dbReference type="SMR" id="B5ZBF7"/>
<dbReference type="STRING" id="565575.UUR10_0354"/>
<dbReference type="KEGG" id="uue:UUR10_0354"/>
<dbReference type="eggNOG" id="COG0544">
    <property type="taxonomic scope" value="Bacteria"/>
</dbReference>
<dbReference type="HOGENOM" id="CLU_033058_3_2_14"/>
<dbReference type="OrthoDB" id="9767721at2"/>
<dbReference type="Proteomes" id="UP000002018">
    <property type="component" value="Chromosome"/>
</dbReference>
<dbReference type="GO" id="GO:0005737">
    <property type="term" value="C:cytoplasm"/>
    <property type="evidence" value="ECO:0007669"/>
    <property type="project" value="UniProtKB-SubCell"/>
</dbReference>
<dbReference type="GO" id="GO:0003755">
    <property type="term" value="F:peptidyl-prolyl cis-trans isomerase activity"/>
    <property type="evidence" value="ECO:0007669"/>
    <property type="project" value="UniProtKB-UniRule"/>
</dbReference>
<dbReference type="GO" id="GO:0044183">
    <property type="term" value="F:protein folding chaperone"/>
    <property type="evidence" value="ECO:0007669"/>
    <property type="project" value="TreeGrafter"/>
</dbReference>
<dbReference type="GO" id="GO:0043022">
    <property type="term" value="F:ribosome binding"/>
    <property type="evidence" value="ECO:0007669"/>
    <property type="project" value="TreeGrafter"/>
</dbReference>
<dbReference type="GO" id="GO:0051083">
    <property type="term" value="P:'de novo' cotranslational protein folding"/>
    <property type="evidence" value="ECO:0007669"/>
    <property type="project" value="TreeGrafter"/>
</dbReference>
<dbReference type="GO" id="GO:0051301">
    <property type="term" value="P:cell division"/>
    <property type="evidence" value="ECO:0007669"/>
    <property type="project" value="UniProtKB-KW"/>
</dbReference>
<dbReference type="GO" id="GO:0061077">
    <property type="term" value="P:chaperone-mediated protein folding"/>
    <property type="evidence" value="ECO:0007669"/>
    <property type="project" value="TreeGrafter"/>
</dbReference>
<dbReference type="GO" id="GO:0015031">
    <property type="term" value="P:protein transport"/>
    <property type="evidence" value="ECO:0007669"/>
    <property type="project" value="UniProtKB-UniRule"/>
</dbReference>
<dbReference type="GO" id="GO:0043335">
    <property type="term" value="P:protein unfolding"/>
    <property type="evidence" value="ECO:0007669"/>
    <property type="project" value="TreeGrafter"/>
</dbReference>
<dbReference type="FunFam" id="3.10.50.40:FF:000001">
    <property type="entry name" value="Trigger factor"/>
    <property type="match status" value="1"/>
</dbReference>
<dbReference type="Gene3D" id="3.10.50.40">
    <property type="match status" value="1"/>
</dbReference>
<dbReference type="Gene3D" id="3.30.70.1050">
    <property type="entry name" value="Trigger factor ribosome-binding domain"/>
    <property type="match status" value="1"/>
</dbReference>
<dbReference type="Gene3D" id="1.10.3120.10">
    <property type="entry name" value="Trigger factor, C-terminal domain"/>
    <property type="match status" value="1"/>
</dbReference>
<dbReference type="HAMAP" id="MF_00303">
    <property type="entry name" value="Trigger_factor_Tig"/>
    <property type="match status" value="1"/>
</dbReference>
<dbReference type="InterPro" id="IPR046357">
    <property type="entry name" value="PPIase_dom_sf"/>
</dbReference>
<dbReference type="InterPro" id="IPR001179">
    <property type="entry name" value="PPIase_FKBP_dom"/>
</dbReference>
<dbReference type="InterPro" id="IPR005215">
    <property type="entry name" value="Trig_fac"/>
</dbReference>
<dbReference type="InterPro" id="IPR008880">
    <property type="entry name" value="Trigger_fac_C"/>
</dbReference>
<dbReference type="InterPro" id="IPR037041">
    <property type="entry name" value="Trigger_fac_C_sf"/>
</dbReference>
<dbReference type="InterPro" id="IPR008881">
    <property type="entry name" value="Trigger_fac_ribosome-bd_bac"/>
</dbReference>
<dbReference type="InterPro" id="IPR036611">
    <property type="entry name" value="Trigger_fac_ribosome-bd_sf"/>
</dbReference>
<dbReference type="InterPro" id="IPR027304">
    <property type="entry name" value="Trigger_fact/SurA_dom_sf"/>
</dbReference>
<dbReference type="NCBIfam" id="TIGR00115">
    <property type="entry name" value="tig"/>
    <property type="match status" value="1"/>
</dbReference>
<dbReference type="PANTHER" id="PTHR30560">
    <property type="entry name" value="TRIGGER FACTOR CHAPERONE AND PEPTIDYL-PROLYL CIS/TRANS ISOMERASE"/>
    <property type="match status" value="1"/>
</dbReference>
<dbReference type="PANTHER" id="PTHR30560:SF3">
    <property type="entry name" value="TRIGGER FACTOR-LIKE PROTEIN TIG, CHLOROPLASTIC"/>
    <property type="match status" value="1"/>
</dbReference>
<dbReference type="Pfam" id="PF00254">
    <property type="entry name" value="FKBP_C"/>
    <property type="match status" value="1"/>
</dbReference>
<dbReference type="Pfam" id="PF05698">
    <property type="entry name" value="Trigger_C"/>
    <property type="match status" value="1"/>
</dbReference>
<dbReference type="Pfam" id="PF05697">
    <property type="entry name" value="Trigger_N"/>
    <property type="match status" value="1"/>
</dbReference>
<dbReference type="PIRSF" id="PIRSF003095">
    <property type="entry name" value="Trigger_factor"/>
    <property type="match status" value="1"/>
</dbReference>
<dbReference type="SUPFAM" id="SSF54534">
    <property type="entry name" value="FKBP-like"/>
    <property type="match status" value="1"/>
</dbReference>
<dbReference type="SUPFAM" id="SSF109998">
    <property type="entry name" value="Triger factor/SurA peptide-binding domain-like"/>
    <property type="match status" value="1"/>
</dbReference>
<dbReference type="SUPFAM" id="SSF102735">
    <property type="entry name" value="Trigger factor ribosome-binding domain"/>
    <property type="match status" value="1"/>
</dbReference>
<dbReference type="PROSITE" id="PS50059">
    <property type="entry name" value="FKBP_PPIASE"/>
    <property type="match status" value="1"/>
</dbReference>
<evidence type="ECO:0000255" key="1">
    <source>
        <dbReference type="HAMAP-Rule" id="MF_00303"/>
    </source>
</evidence>
<evidence type="ECO:0000256" key="2">
    <source>
        <dbReference type="SAM" id="MobiDB-lite"/>
    </source>
</evidence>
<organism>
    <name type="scientific">Ureaplasma urealyticum serovar 10 (strain ATCC 33699 / Western)</name>
    <dbReference type="NCBI Taxonomy" id="565575"/>
    <lineage>
        <taxon>Bacteria</taxon>
        <taxon>Bacillati</taxon>
        <taxon>Mycoplasmatota</taxon>
        <taxon>Mycoplasmoidales</taxon>
        <taxon>Mycoplasmoidaceae</taxon>
        <taxon>Ureaplasma</taxon>
    </lineage>
</organism>
<accession>B5ZBF7</accession>
<protein>
    <recommendedName>
        <fullName evidence="1">Trigger factor</fullName>
        <shortName evidence="1">TF</shortName>
        <ecNumber evidence="1">5.2.1.8</ecNumber>
    </recommendedName>
    <alternativeName>
        <fullName evidence="1">PPIase</fullName>
    </alternativeName>
</protein>
<reference key="1">
    <citation type="submission" date="2008-10" db="EMBL/GenBank/DDBJ databases">
        <title>Genome sequence of Ureaplasma urealyticum serovar 10 ATCC-33699.</title>
        <authorList>
            <person name="Shrivastava S."/>
            <person name="Methe B.A."/>
            <person name="Glass J."/>
            <person name="White K."/>
            <person name="Duffy L.B."/>
        </authorList>
    </citation>
    <scope>NUCLEOTIDE SEQUENCE [LARGE SCALE GENOMIC DNA]</scope>
    <source>
        <strain>ATCC 33699 / Western</strain>
    </source>
</reference>
<keyword id="KW-0131">Cell cycle</keyword>
<keyword id="KW-0132">Cell division</keyword>
<keyword id="KW-0143">Chaperone</keyword>
<keyword id="KW-0963">Cytoplasm</keyword>
<keyword id="KW-0413">Isomerase</keyword>
<keyword id="KW-0697">Rotamase</keyword>
<feature type="chain" id="PRO_1000115597" description="Trigger factor">
    <location>
        <begin position="1"/>
        <end position="472"/>
    </location>
</feature>
<feature type="domain" description="PPIase FKBP-type" evidence="1">
    <location>
        <begin position="172"/>
        <end position="257"/>
    </location>
</feature>
<feature type="region of interest" description="Disordered" evidence="2">
    <location>
        <begin position="439"/>
        <end position="472"/>
    </location>
</feature>
<feature type="compositionally biased region" description="Polar residues" evidence="2">
    <location>
        <begin position="439"/>
        <end position="449"/>
    </location>
</feature>
<feature type="compositionally biased region" description="Polar residues" evidence="2">
    <location>
        <begin position="461"/>
        <end position="472"/>
    </location>
</feature>
<proteinExistence type="inferred from homology"/>